<organism>
    <name type="scientific">Xenopus tropicalis</name>
    <name type="common">Western clawed frog</name>
    <name type="synonym">Silurana tropicalis</name>
    <dbReference type="NCBI Taxonomy" id="8364"/>
    <lineage>
        <taxon>Eukaryota</taxon>
        <taxon>Metazoa</taxon>
        <taxon>Chordata</taxon>
        <taxon>Craniata</taxon>
        <taxon>Vertebrata</taxon>
        <taxon>Euteleostomi</taxon>
        <taxon>Amphibia</taxon>
        <taxon>Batrachia</taxon>
        <taxon>Anura</taxon>
        <taxon>Pipoidea</taxon>
        <taxon>Pipidae</taxon>
        <taxon>Xenopodinae</taxon>
        <taxon>Xenopus</taxon>
        <taxon>Silurana</taxon>
    </lineage>
</organism>
<feature type="transit peptide" description="Mitochondrion" evidence="2">
    <location>
        <begin position="1"/>
        <end position="42"/>
    </location>
</feature>
<feature type="chain" id="PRO_0000338618" description="Leucine-rich PPR motif-containing protein, mitochondrial">
    <location>
        <begin position="43"/>
        <end position="1391"/>
    </location>
</feature>
<feature type="repeat" description="PPR 1">
    <location>
        <begin position="110"/>
        <end position="144"/>
    </location>
</feature>
<feature type="repeat" description="PPR 2">
    <location>
        <begin position="145"/>
        <end position="179"/>
    </location>
</feature>
<feature type="repeat" description="PPR 3">
    <location>
        <begin position="180"/>
        <end position="214"/>
    </location>
</feature>
<feature type="repeat" description="PPR 4">
    <location>
        <begin position="215"/>
        <end position="249"/>
    </location>
</feature>
<feature type="repeat" description="PPR 5">
    <location>
        <begin position="250"/>
        <end position="284"/>
    </location>
</feature>
<feature type="repeat" description="PPR 6">
    <location>
        <begin position="389"/>
        <end position="425"/>
    </location>
</feature>
<feature type="repeat" description="PPR 7">
    <location>
        <begin position="704"/>
        <end position="738"/>
    </location>
</feature>
<feature type="repeat" description="PPR 8">
    <location>
        <begin position="741"/>
        <end position="775"/>
    </location>
</feature>
<feature type="repeat" description="PPR 9">
    <location>
        <begin position="779"/>
        <end position="813"/>
    </location>
</feature>
<feature type="repeat" description="PPR 10">
    <location>
        <begin position="815"/>
        <end position="850"/>
    </location>
</feature>
<feature type="repeat" description="PPR 11">
    <location>
        <begin position="948"/>
        <end position="982"/>
    </location>
</feature>
<feature type="repeat" description="PPR 12">
    <location>
        <begin position="1028"/>
        <end position="1062"/>
    </location>
</feature>
<feature type="repeat" description="PPR 13">
    <location>
        <begin position="1063"/>
        <end position="1093"/>
    </location>
</feature>
<feature type="repeat" description="PPR 14">
    <location>
        <begin position="1100"/>
        <end position="1134"/>
    </location>
</feature>
<feature type="repeat" description="PPR 15">
    <location>
        <begin position="1310"/>
        <end position="1344"/>
    </location>
</feature>
<feature type="region of interest" description="RNA-binding" evidence="1">
    <location>
        <begin position="1118"/>
        <end position="1387"/>
    </location>
</feature>
<keyword id="KW-0238">DNA-binding</keyword>
<keyword id="KW-0496">Mitochondrion</keyword>
<keyword id="KW-0539">Nucleus</keyword>
<keyword id="KW-1185">Reference proteome</keyword>
<keyword id="KW-0677">Repeat</keyword>
<keyword id="KW-0694">RNA-binding</keyword>
<keyword id="KW-0804">Transcription</keyword>
<keyword id="KW-0805">Transcription regulation</keyword>
<keyword id="KW-0809">Transit peptide</keyword>
<keyword id="KW-0813">Transport</keyword>
<sequence length="1391" mass="156250">MSALLAGARFLLRPGLRALPAPCVRLSPGQGRYLNNTPGHFAIAAQQKGHIHEEPVSAVRAKQAQQFDWALNKLDSSVRRTGRITKTLLQKIFHDVCRTGYPSSNQALLLLRSCGSLLPELQMSERTEMAHRIWEKLQELGAVFDVSHYNALLKVYLQNEHKFSPTEYLAKMEAANVQPNRVTYQRLIAAYCNEGDIEGASKILGFMKNKDLPITEAVFNTLVTGHARAGDMENAKNILSVMRSAGIEPGPETYVALLTAYAEKGDINNIKQTLENVEKNEGSLTDRDLMQVIWSLAKAGYPQYVQDIVERMRYDRGYIPDAMNLCLSLMTQGFEDVAFLVLKSFSAASHDSPNGDSLHHGNFFLRHCVNLDKPANKVKQFCDGLKEENLHSAPLQFALYCSLDAKKADLALELMKMMKQEGMPVRPHYCWPLLISFQKEKNAEGTIKVIKALSEIGVELDVETYSNYVLSVFNDVKSARAQLQEHGCTVDSSWFNLAELRHDAVSGNLEEVYSLLSSPSFPSVDLGHFRGSLITAFKRSNNVDLKAKITELLYKDGRYCQAASGPNEAVGYFLYNLIDSMSDAEVQAKEEHLRQYFHQLKNANIVISANIYRGIRNLLDSSHVPELIKDVIVLVDSQETLTSSDIAKSAELKASTLEEEIETLKAENKPFGDVLKQLVMIHCSEENMQKALEVKAKYEQENLAIGTYAALIQLCCRHDNPDEALNLKQELNRKDSSAVLDTSKYLALVKVFGKNGRIADAINVLKEMKEKDVPLKETTTTSFFHILNAAALRGDAETVDKIHESIVTLGLAKPTSNLCSPLVSVHLEKGDLPAAMETLFTCSKKYNCMPRLHDVLCRLVEKGDTDLLQKAMDHISQERGEMAMLYDLLFAFLHTGKYKEARKIIETPGLRARPGRLQWFAEKCIATNQMEALENLVDMTQKLFECDRDDMYYYLLKLCKENDDWKKADSAWTKIQEENVIPRERTLRLLADIFRRNGQEVPFDVPETWYKDAAESKVLASSSAPSSPESSFQKRVQVLSKKNRAKDAYEAFMEGENNGTAMSASAYSSLIRSMLSEGMLEEAKKVLNTAENHIKGFTLNDAASSLLIITQVRRDYLKDALASLKAMLEGDKVPTQLAVTRLVQALALKGDLEGIEVVENMMRNIGSSIRLSQMLFINNKMLAHLKRGKTEEAIELIEPLYTGTDSQVTSISYVFRKAMEEKMESALEKLSGMAERLANQFAVYRPVTDLFLQYIQVGRKDDARFLLQRCGSIAEQTPVLVSFISRSAQIPGQAQLIKDLLELIPEFSERETAYSYLMKCYATDKDATAATALYEKMKSESVSPDELFLKRLAVLLREAGEPVPFSEPPESFKFYADKLKKDKADSYDDEH</sequence>
<dbReference type="EMBL" id="CR942422">
    <property type="protein sequence ID" value="CAJ83132.1"/>
    <property type="molecule type" value="mRNA"/>
</dbReference>
<dbReference type="RefSeq" id="NP_001039203.1">
    <property type="nucleotide sequence ID" value="NM_001045738.1"/>
</dbReference>
<dbReference type="SMR" id="Q28C74"/>
<dbReference type="FunCoup" id="Q28C74">
    <property type="interactions" value="2559"/>
</dbReference>
<dbReference type="STRING" id="8364.ENSXETP00000039892"/>
<dbReference type="PaxDb" id="8364-ENSXETP00000060744"/>
<dbReference type="GeneID" id="734062"/>
<dbReference type="KEGG" id="xtr:734062"/>
<dbReference type="AGR" id="Xenbase:XB-GENE-1014657"/>
<dbReference type="CTD" id="10128"/>
<dbReference type="Xenbase" id="XB-GENE-1014657">
    <property type="gene designation" value="lrpprc"/>
</dbReference>
<dbReference type="eggNOG" id="KOG4318">
    <property type="taxonomic scope" value="Eukaryota"/>
</dbReference>
<dbReference type="InParanoid" id="Q28C74"/>
<dbReference type="OMA" id="HIDRNKI"/>
<dbReference type="OrthoDB" id="185373at2759"/>
<dbReference type="Proteomes" id="UP000008143">
    <property type="component" value="Chromosome 5"/>
</dbReference>
<dbReference type="GO" id="GO:0005739">
    <property type="term" value="C:mitochondrion"/>
    <property type="evidence" value="ECO:0007669"/>
    <property type="project" value="UniProtKB-SubCell"/>
</dbReference>
<dbReference type="GO" id="GO:0005634">
    <property type="term" value="C:nucleus"/>
    <property type="evidence" value="ECO:0007669"/>
    <property type="project" value="UniProtKB-SubCell"/>
</dbReference>
<dbReference type="GO" id="GO:0003677">
    <property type="term" value="F:DNA binding"/>
    <property type="evidence" value="ECO:0007669"/>
    <property type="project" value="UniProtKB-KW"/>
</dbReference>
<dbReference type="GO" id="GO:0003723">
    <property type="term" value="F:RNA binding"/>
    <property type="evidence" value="ECO:0007669"/>
    <property type="project" value="UniProtKB-KW"/>
</dbReference>
<dbReference type="FunFam" id="1.25.40.10:FF:000428">
    <property type="entry name" value="Leucine-rich PPR motif-containing protein, mitochondrial"/>
    <property type="match status" value="1"/>
</dbReference>
<dbReference type="Gene3D" id="1.25.40.10">
    <property type="entry name" value="Tetratricopeptide repeat domain"/>
    <property type="match status" value="3"/>
</dbReference>
<dbReference type="InterPro" id="IPR016024">
    <property type="entry name" value="ARM-type_fold"/>
</dbReference>
<dbReference type="InterPro" id="IPR033490">
    <property type="entry name" value="LRP130"/>
</dbReference>
<dbReference type="InterPro" id="IPR002885">
    <property type="entry name" value="Pentatricopeptide_rpt"/>
</dbReference>
<dbReference type="InterPro" id="IPR033443">
    <property type="entry name" value="PROP1-like_PPR_dom"/>
</dbReference>
<dbReference type="InterPro" id="IPR011990">
    <property type="entry name" value="TPR-like_helical_dom_sf"/>
</dbReference>
<dbReference type="NCBIfam" id="TIGR00756">
    <property type="entry name" value="PPR"/>
    <property type="match status" value="4"/>
</dbReference>
<dbReference type="PANTHER" id="PTHR46669">
    <property type="entry name" value="LEUCINE-RICH PPR MOTIF-CONTAINING PROTEIN, MITOCHONDRIAL"/>
    <property type="match status" value="1"/>
</dbReference>
<dbReference type="PANTHER" id="PTHR46669:SF1">
    <property type="entry name" value="LEUCINE-RICH PPR MOTIF-CONTAINING PROTEIN, MITOCHONDRIAL"/>
    <property type="match status" value="1"/>
</dbReference>
<dbReference type="Pfam" id="PF01535">
    <property type="entry name" value="PPR"/>
    <property type="match status" value="3"/>
</dbReference>
<dbReference type="Pfam" id="PF13812">
    <property type="entry name" value="PPR_3"/>
    <property type="match status" value="1"/>
</dbReference>
<dbReference type="Pfam" id="PF17177">
    <property type="entry name" value="PPR_long"/>
    <property type="match status" value="1"/>
</dbReference>
<dbReference type="SUPFAM" id="SSF48371">
    <property type="entry name" value="ARM repeat"/>
    <property type="match status" value="1"/>
</dbReference>
<dbReference type="PROSITE" id="PS51375">
    <property type="entry name" value="PPR"/>
    <property type="match status" value="15"/>
</dbReference>
<name>LPPRC_XENTR</name>
<accession>Q28C74</accession>
<proteinExistence type="evidence at transcript level"/>
<evidence type="ECO:0000250" key="1"/>
<evidence type="ECO:0000255" key="2"/>
<protein>
    <recommendedName>
        <fullName>Leucine-rich PPR motif-containing protein, mitochondrial</fullName>
    </recommendedName>
</protein>
<comment type="function">
    <text evidence="1">May play a role in RNA metabolism in both nuclei and mitochondria. May bind mature mRNA in the nucleus outer membrane. In mitochondria binds to poly(A) mRNA. May be involved in transcription regulation. Binds single-stranded DNA (By similarity).</text>
</comment>
<comment type="subcellular location">
    <subcellularLocation>
        <location evidence="1">Mitochondrion</location>
    </subcellularLocation>
    <subcellularLocation>
        <location evidence="1">Nucleus</location>
    </subcellularLocation>
</comment>
<reference key="1">
    <citation type="submission" date="2006-10" db="EMBL/GenBank/DDBJ databases">
        <authorList>
            <consortium name="Sanger Xenopus tropicalis EST/cDNA project"/>
        </authorList>
    </citation>
    <scope>NUCLEOTIDE SEQUENCE [LARGE SCALE MRNA]</scope>
    <source>
        <tissue>Tadpole</tissue>
    </source>
</reference>
<gene>
    <name type="primary">lrpprc</name>
    <name type="ORF">TTpA007l07.1</name>
</gene>